<protein>
    <recommendedName>
        <fullName evidence="1">Elongation factor 4</fullName>
        <shortName evidence="1">EF-4</shortName>
        <ecNumber evidence="1">3.6.5.n1</ecNumber>
    </recommendedName>
    <alternativeName>
        <fullName evidence="1">Ribosomal back-translocase LepA</fullName>
    </alternativeName>
</protein>
<organism>
    <name type="scientific">Klebsiella pneumoniae (strain 342)</name>
    <dbReference type="NCBI Taxonomy" id="507522"/>
    <lineage>
        <taxon>Bacteria</taxon>
        <taxon>Pseudomonadati</taxon>
        <taxon>Pseudomonadota</taxon>
        <taxon>Gammaproteobacteria</taxon>
        <taxon>Enterobacterales</taxon>
        <taxon>Enterobacteriaceae</taxon>
        <taxon>Klebsiella/Raoultella group</taxon>
        <taxon>Klebsiella</taxon>
        <taxon>Klebsiella pneumoniae complex</taxon>
    </lineage>
</organism>
<keyword id="KW-0997">Cell inner membrane</keyword>
<keyword id="KW-1003">Cell membrane</keyword>
<keyword id="KW-0342">GTP-binding</keyword>
<keyword id="KW-0378">Hydrolase</keyword>
<keyword id="KW-0472">Membrane</keyword>
<keyword id="KW-0547">Nucleotide-binding</keyword>
<keyword id="KW-0648">Protein biosynthesis</keyword>
<name>LEPA_KLEP3</name>
<comment type="function">
    <text evidence="1">Required for accurate and efficient protein synthesis under certain stress conditions. May act as a fidelity factor of the translation reaction, by catalyzing a one-codon backward translocation of tRNAs on improperly translocated ribosomes. Back-translocation proceeds from a post-translocation (POST) complex to a pre-translocation (PRE) complex, thus giving elongation factor G a second chance to translocate the tRNAs correctly. Binds to ribosomes in a GTP-dependent manner.</text>
</comment>
<comment type="catalytic activity">
    <reaction evidence="1">
        <text>GTP + H2O = GDP + phosphate + H(+)</text>
        <dbReference type="Rhea" id="RHEA:19669"/>
        <dbReference type="ChEBI" id="CHEBI:15377"/>
        <dbReference type="ChEBI" id="CHEBI:15378"/>
        <dbReference type="ChEBI" id="CHEBI:37565"/>
        <dbReference type="ChEBI" id="CHEBI:43474"/>
        <dbReference type="ChEBI" id="CHEBI:58189"/>
        <dbReference type="EC" id="3.6.5.n1"/>
    </reaction>
</comment>
<comment type="subcellular location">
    <subcellularLocation>
        <location evidence="1">Cell inner membrane</location>
        <topology evidence="1">Peripheral membrane protein</topology>
        <orientation evidence="1">Cytoplasmic side</orientation>
    </subcellularLocation>
</comment>
<comment type="similarity">
    <text evidence="1">Belongs to the TRAFAC class translation factor GTPase superfamily. Classic translation factor GTPase family. LepA subfamily.</text>
</comment>
<gene>
    <name evidence="1" type="primary">lepA</name>
    <name type="ordered locus">KPK_1228</name>
</gene>
<proteinExistence type="inferred from homology"/>
<accession>B5XNG8</accession>
<evidence type="ECO:0000255" key="1">
    <source>
        <dbReference type="HAMAP-Rule" id="MF_00071"/>
    </source>
</evidence>
<feature type="chain" id="PRO_1000092409" description="Elongation factor 4">
    <location>
        <begin position="1"/>
        <end position="599"/>
    </location>
</feature>
<feature type="domain" description="tr-type G">
    <location>
        <begin position="2"/>
        <end position="184"/>
    </location>
</feature>
<feature type="binding site" evidence="1">
    <location>
        <begin position="14"/>
        <end position="19"/>
    </location>
    <ligand>
        <name>GTP</name>
        <dbReference type="ChEBI" id="CHEBI:37565"/>
    </ligand>
</feature>
<feature type="binding site" evidence="1">
    <location>
        <begin position="131"/>
        <end position="134"/>
    </location>
    <ligand>
        <name>GTP</name>
        <dbReference type="ChEBI" id="CHEBI:37565"/>
    </ligand>
</feature>
<reference key="1">
    <citation type="journal article" date="2008" name="PLoS Genet.">
        <title>Complete genome sequence of the N2-fixing broad host range endophyte Klebsiella pneumoniae 342 and virulence predictions verified in mice.</title>
        <authorList>
            <person name="Fouts D.E."/>
            <person name="Tyler H.L."/>
            <person name="DeBoy R.T."/>
            <person name="Daugherty S."/>
            <person name="Ren Q."/>
            <person name="Badger J.H."/>
            <person name="Durkin A.S."/>
            <person name="Huot H."/>
            <person name="Shrivastava S."/>
            <person name="Kothari S."/>
            <person name="Dodson R.J."/>
            <person name="Mohamoud Y."/>
            <person name="Khouri H."/>
            <person name="Roesch L.F.W."/>
            <person name="Krogfelt K.A."/>
            <person name="Struve C."/>
            <person name="Triplett E.W."/>
            <person name="Methe B.A."/>
        </authorList>
    </citation>
    <scope>NUCLEOTIDE SEQUENCE [LARGE SCALE GENOMIC DNA]</scope>
    <source>
        <strain>342</strain>
    </source>
</reference>
<dbReference type="EC" id="3.6.5.n1" evidence="1"/>
<dbReference type="EMBL" id="CP000964">
    <property type="protein sequence ID" value="ACI09939.1"/>
    <property type="molecule type" value="Genomic_DNA"/>
</dbReference>
<dbReference type="SMR" id="B5XNG8"/>
<dbReference type="KEGG" id="kpe:KPK_1228"/>
<dbReference type="HOGENOM" id="CLU_009995_3_3_6"/>
<dbReference type="Proteomes" id="UP000001734">
    <property type="component" value="Chromosome"/>
</dbReference>
<dbReference type="GO" id="GO:0005886">
    <property type="term" value="C:plasma membrane"/>
    <property type="evidence" value="ECO:0007669"/>
    <property type="project" value="UniProtKB-SubCell"/>
</dbReference>
<dbReference type="GO" id="GO:0005525">
    <property type="term" value="F:GTP binding"/>
    <property type="evidence" value="ECO:0007669"/>
    <property type="project" value="UniProtKB-UniRule"/>
</dbReference>
<dbReference type="GO" id="GO:0003924">
    <property type="term" value="F:GTPase activity"/>
    <property type="evidence" value="ECO:0007669"/>
    <property type="project" value="UniProtKB-UniRule"/>
</dbReference>
<dbReference type="GO" id="GO:0097216">
    <property type="term" value="F:guanosine tetraphosphate binding"/>
    <property type="evidence" value="ECO:0007669"/>
    <property type="project" value="UniProtKB-ARBA"/>
</dbReference>
<dbReference type="GO" id="GO:0043022">
    <property type="term" value="F:ribosome binding"/>
    <property type="evidence" value="ECO:0007669"/>
    <property type="project" value="UniProtKB-UniRule"/>
</dbReference>
<dbReference type="GO" id="GO:0003746">
    <property type="term" value="F:translation elongation factor activity"/>
    <property type="evidence" value="ECO:0007669"/>
    <property type="project" value="UniProtKB-UniRule"/>
</dbReference>
<dbReference type="GO" id="GO:0045727">
    <property type="term" value="P:positive regulation of translation"/>
    <property type="evidence" value="ECO:0007669"/>
    <property type="project" value="UniProtKB-UniRule"/>
</dbReference>
<dbReference type="CDD" id="cd03699">
    <property type="entry name" value="EF4_II"/>
    <property type="match status" value="1"/>
</dbReference>
<dbReference type="CDD" id="cd16260">
    <property type="entry name" value="EF4_III"/>
    <property type="match status" value="1"/>
</dbReference>
<dbReference type="CDD" id="cd01890">
    <property type="entry name" value="LepA"/>
    <property type="match status" value="1"/>
</dbReference>
<dbReference type="CDD" id="cd03709">
    <property type="entry name" value="lepA_C"/>
    <property type="match status" value="1"/>
</dbReference>
<dbReference type="FunFam" id="3.30.70.240:FF:000005">
    <property type="entry name" value="Elongation factor 4"/>
    <property type="match status" value="1"/>
</dbReference>
<dbReference type="FunFam" id="3.40.50.300:FF:000078">
    <property type="entry name" value="Elongation factor 4"/>
    <property type="match status" value="1"/>
</dbReference>
<dbReference type="FunFam" id="2.40.30.10:FF:000015">
    <property type="entry name" value="Translation factor GUF1, mitochondrial"/>
    <property type="match status" value="1"/>
</dbReference>
<dbReference type="FunFam" id="3.30.70.2570:FF:000001">
    <property type="entry name" value="Translation factor GUF1, mitochondrial"/>
    <property type="match status" value="1"/>
</dbReference>
<dbReference type="FunFam" id="3.30.70.870:FF:000004">
    <property type="entry name" value="Translation factor GUF1, mitochondrial"/>
    <property type="match status" value="1"/>
</dbReference>
<dbReference type="Gene3D" id="3.30.70.240">
    <property type="match status" value="1"/>
</dbReference>
<dbReference type="Gene3D" id="3.30.70.2570">
    <property type="entry name" value="Elongation factor 4, C-terminal domain"/>
    <property type="match status" value="1"/>
</dbReference>
<dbReference type="Gene3D" id="3.30.70.870">
    <property type="entry name" value="Elongation Factor G (Translational Gtpase), domain 3"/>
    <property type="match status" value="1"/>
</dbReference>
<dbReference type="Gene3D" id="3.40.50.300">
    <property type="entry name" value="P-loop containing nucleotide triphosphate hydrolases"/>
    <property type="match status" value="1"/>
</dbReference>
<dbReference type="Gene3D" id="2.40.30.10">
    <property type="entry name" value="Translation factors"/>
    <property type="match status" value="1"/>
</dbReference>
<dbReference type="HAMAP" id="MF_00071">
    <property type="entry name" value="LepA"/>
    <property type="match status" value="1"/>
</dbReference>
<dbReference type="InterPro" id="IPR006297">
    <property type="entry name" value="EF-4"/>
</dbReference>
<dbReference type="InterPro" id="IPR035647">
    <property type="entry name" value="EFG_III/V"/>
</dbReference>
<dbReference type="InterPro" id="IPR000640">
    <property type="entry name" value="EFG_V-like"/>
</dbReference>
<dbReference type="InterPro" id="IPR004161">
    <property type="entry name" value="EFTu-like_2"/>
</dbReference>
<dbReference type="InterPro" id="IPR031157">
    <property type="entry name" value="G_TR_CS"/>
</dbReference>
<dbReference type="InterPro" id="IPR038363">
    <property type="entry name" value="LepA_C_sf"/>
</dbReference>
<dbReference type="InterPro" id="IPR013842">
    <property type="entry name" value="LepA_CTD"/>
</dbReference>
<dbReference type="InterPro" id="IPR035654">
    <property type="entry name" value="LepA_IV"/>
</dbReference>
<dbReference type="InterPro" id="IPR027417">
    <property type="entry name" value="P-loop_NTPase"/>
</dbReference>
<dbReference type="InterPro" id="IPR005225">
    <property type="entry name" value="Small_GTP-bd"/>
</dbReference>
<dbReference type="InterPro" id="IPR000795">
    <property type="entry name" value="T_Tr_GTP-bd_dom"/>
</dbReference>
<dbReference type="NCBIfam" id="TIGR01393">
    <property type="entry name" value="lepA"/>
    <property type="match status" value="1"/>
</dbReference>
<dbReference type="NCBIfam" id="TIGR00231">
    <property type="entry name" value="small_GTP"/>
    <property type="match status" value="1"/>
</dbReference>
<dbReference type="PANTHER" id="PTHR43512:SF4">
    <property type="entry name" value="TRANSLATION FACTOR GUF1 HOMOLOG, CHLOROPLASTIC"/>
    <property type="match status" value="1"/>
</dbReference>
<dbReference type="PANTHER" id="PTHR43512">
    <property type="entry name" value="TRANSLATION FACTOR GUF1-RELATED"/>
    <property type="match status" value="1"/>
</dbReference>
<dbReference type="Pfam" id="PF00679">
    <property type="entry name" value="EFG_C"/>
    <property type="match status" value="1"/>
</dbReference>
<dbReference type="Pfam" id="PF00009">
    <property type="entry name" value="GTP_EFTU"/>
    <property type="match status" value="1"/>
</dbReference>
<dbReference type="Pfam" id="PF03144">
    <property type="entry name" value="GTP_EFTU_D2"/>
    <property type="match status" value="1"/>
</dbReference>
<dbReference type="Pfam" id="PF06421">
    <property type="entry name" value="LepA_C"/>
    <property type="match status" value="1"/>
</dbReference>
<dbReference type="PRINTS" id="PR00315">
    <property type="entry name" value="ELONGATNFCT"/>
</dbReference>
<dbReference type="SUPFAM" id="SSF54980">
    <property type="entry name" value="EF-G C-terminal domain-like"/>
    <property type="match status" value="2"/>
</dbReference>
<dbReference type="SUPFAM" id="SSF52540">
    <property type="entry name" value="P-loop containing nucleoside triphosphate hydrolases"/>
    <property type="match status" value="1"/>
</dbReference>
<dbReference type="PROSITE" id="PS00301">
    <property type="entry name" value="G_TR_1"/>
    <property type="match status" value="1"/>
</dbReference>
<dbReference type="PROSITE" id="PS51722">
    <property type="entry name" value="G_TR_2"/>
    <property type="match status" value="1"/>
</dbReference>
<sequence>MKNIRNFSIIAHIDHGKSTLSDRIIQICGGLSDREMAAQVLDSMDLERERGITIKAQSVTLDYKASDGETYQLNFIDTPGHVDFSYEVSRSLAACEGALLVVDAGQGVEAQTLANCYTAMEMDLEVVPVLNKIDLPAADPERVADEIEDIVGIDAHDAVRCSAKTGVGVPDVLERLVRDIPPPEGDPDAPLQALIIDSWFDNYLGVVSLVRIKNGTMRKGDKIKVMSTGQVYNADRLGIFTPKQVDRTELKCGEVGWLVCAIKDILGAPVGDTLTAARNPADKALPGFKKVKPQVYAGLFPVSSDDYENFRDALGKLSLNDASLFYEPESSTALGFGFRCGFLGLLHMEIIQERLEREYDLDLITTAPTVVYEVETTSKEVIYVDSPSKLPPLNNIQELREPIAECHMLLPQEFLGNVITLCIEKRGVQTNMVYHGKQVALTYEIPMAEVVLDFFDRLKSTSRGYASLDYNFKRFQASNMVRVDVLINGERVDALALITHNDNAPYRGRELVEKMKELIPRQQFDIAIQAAIGNHIIARSTVKQLRKNVLAKCYGGDVSRKKKLLQKQKEGKKRMKQVGNVELPQEAFLAILHVGKDGK</sequence>